<proteinExistence type="inferred from homology"/>
<feature type="chain" id="PRO_0000185591" description="Diaminopropionate ammonia-lyase">
    <location>
        <begin position="1"/>
        <end position="398"/>
    </location>
</feature>
<feature type="modified residue" description="N6-(pyridoxal phosphate)lysine" evidence="1">
    <location>
        <position position="77"/>
    </location>
</feature>
<gene>
    <name type="primary">ygeX</name>
    <name type="ordered locus">c3449</name>
</gene>
<protein>
    <recommendedName>
        <fullName>Diaminopropionate ammonia-lyase</fullName>
        <shortName>DAPAL</shortName>
        <ecNumber evidence="2">4.3.1.15</ecNumber>
    </recommendedName>
    <alternativeName>
        <fullName>2,3-diaminopropionate ammonia-lyase</fullName>
    </alternativeName>
    <alternativeName>
        <fullName>Alpha,beta-diaminopropionate ammonia-lyase</fullName>
    </alternativeName>
</protein>
<dbReference type="EC" id="4.3.1.15" evidence="2"/>
<dbReference type="EMBL" id="AE014075">
    <property type="protein sequence ID" value="AAN81894.1"/>
    <property type="molecule type" value="Genomic_DNA"/>
</dbReference>
<dbReference type="SMR" id="P66900"/>
<dbReference type="STRING" id="199310.c3449"/>
<dbReference type="KEGG" id="ecc:c3449"/>
<dbReference type="eggNOG" id="COG1171">
    <property type="taxonomic scope" value="Bacteria"/>
</dbReference>
<dbReference type="HOGENOM" id="CLU_021802_8_0_6"/>
<dbReference type="BioCyc" id="ECOL199310:C3449-MONOMER"/>
<dbReference type="Proteomes" id="UP000001410">
    <property type="component" value="Chromosome"/>
</dbReference>
<dbReference type="GO" id="GO:0008838">
    <property type="term" value="F:diaminopropionate ammonia-lyase activity"/>
    <property type="evidence" value="ECO:0007669"/>
    <property type="project" value="UniProtKB-EC"/>
</dbReference>
<dbReference type="GO" id="GO:0030170">
    <property type="term" value="F:pyridoxal phosphate binding"/>
    <property type="evidence" value="ECO:0007669"/>
    <property type="project" value="InterPro"/>
</dbReference>
<dbReference type="CDD" id="cd00640">
    <property type="entry name" value="Trp-synth-beta_II"/>
    <property type="match status" value="1"/>
</dbReference>
<dbReference type="FunFam" id="3.40.50.1100:FF:000033">
    <property type="entry name" value="Diaminopropionate ammonia-lyase"/>
    <property type="match status" value="1"/>
</dbReference>
<dbReference type="FunFam" id="3.40.50.1100:FF:000034">
    <property type="entry name" value="Diaminopropionate ammonia-lyase"/>
    <property type="match status" value="1"/>
</dbReference>
<dbReference type="Gene3D" id="3.40.50.1100">
    <property type="match status" value="2"/>
</dbReference>
<dbReference type="InterPro" id="IPR010081">
    <property type="entry name" value="DiNH2opropionate_NH3_lyase"/>
</dbReference>
<dbReference type="InterPro" id="IPR019871">
    <property type="entry name" value="DiNH2propionate_NH3-lyase_sub"/>
</dbReference>
<dbReference type="InterPro" id="IPR001926">
    <property type="entry name" value="TrpB-like_PALP"/>
</dbReference>
<dbReference type="InterPro" id="IPR036052">
    <property type="entry name" value="TrpB-like_PALP_sf"/>
</dbReference>
<dbReference type="NCBIfam" id="TIGR03528">
    <property type="entry name" value="2_3_DAP_am_ly"/>
    <property type="match status" value="1"/>
</dbReference>
<dbReference type="NCBIfam" id="TIGR01747">
    <property type="entry name" value="diampropi_NH3ly"/>
    <property type="match status" value="1"/>
</dbReference>
<dbReference type="NCBIfam" id="NF006058">
    <property type="entry name" value="PRK08206.1"/>
    <property type="match status" value="1"/>
</dbReference>
<dbReference type="PANTHER" id="PTHR42937">
    <property type="match status" value="1"/>
</dbReference>
<dbReference type="PANTHER" id="PTHR42937:SF1">
    <property type="entry name" value="DIAMINOPROPIONATE AMMONIA-LYASE"/>
    <property type="match status" value="1"/>
</dbReference>
<dbReference type="Pfam" id="PF00291">
    <property type="entry name" value="PALP"/>
    <property type="match status" value="1"/>
</dbReference>
<dbReference type="SUPFAM" id="SSF53686">
    <property type="entry name" value="Tryptophan synthase beta subunit-like PLP-dependent enzymes"/>
    <property type="match status" value="1"/>
</dbReference>
<organism>
    <name type="scientific">Escherichia coli O6:H1 (strain CFT073 / ATCC 700928 / UPEC)</name>
    <dbReference type="NCBI Taxonomy" id="199310"/>
    <lineage>
        <taxon>Bacteria</taxon>
        <taxon>Pseudomonadati</taxon>
        <taxon>Pseudomonadota</taxon>
        <taxon>Gammaproteobacteria</taxon>
        <taxon>Enterobacterales</taxon>
        <taxon>Enterobacteriaceae</taxon>
        <taxon>Escherichia</taxon>
    </lineage>
</organism>
<evidence type="ECO:0000250" key="1"/>
<evidence type="ECO:0000250" key="2">
    <source>
        <dbReference type="UniProtKB" id="P66899"/>
    </source>
</evidence>
<evidence type="ECO:0000305" key="3"/>
<keyword id="KW-0456">Lyase</keyword>
<keyword id="KW-0663">Pyridoxal phosphate</keyword>
<keyword id="KW-1185">Reference proteome</keyword>
<comment type="function">
    <text evidence="2">Catalyzes the alpha,beta-elimination reaction of both L- and D-alpha,beta-diaminopropionate (DAP) to form pyruvate and ammonia. The D-isomer of serine is degraded to pyruvate, though very poorly; other amino acids (L-serine, D- and L-threonine, D- and L-beta-Cl-alanine) are not substrates.</text>
</comment>
<comment type="catalytic activity">
    <reaction evidence="2">
        <text>(S)-2,3-diaminopropanoate + H2O + H(+) = pyruvate + 2 NH4(+)</text>
        <dbReference type="Rhea" id="RHEA:22084"/>
        <dbReference type="ChEBI" id="CHEBI:15361"/>
        <dbReference type="ChEBI" id="CHEBI:15377"/>
        <dbReference type="ChEBI" id="CHEBI:15378"/>
        <dbReference type="ChEBI" id="CHEBI:28938"/>
        <dbReference type="ChEBI" id="CHEBI:57721"/>
        <dbReference type="EC" id="4.3.1.15"/>
    </reaction>
</comment>
<comment type="catalytic activity">
    <reaction evidence="2">
        <text>(R)-2,3-diaminopropanoate + H2O + H(+) = pyruvate + 2 NH4(+)</text>
        <dbReference type="Rhea" id="RHEA:52432"/>
        <dbReference type="ChEBI" id="CHEBI:15361"/>
        <dbReference type="ChEBI" id="CHEBI:15377"/>
        <dbReference type="ChEBI" id="CHEBI:15378"/>
        <dbReference type="ChEBI" id="CHEBI:28938"/>
        <dbReference type="ChEBI" id="CHEBI:136599"/>
        <dbReference type="EC" id="4.3.1.15"/>
    </reaction>
</comment>
<comment type="cofactor">
    <cofactor evidence="2">
        <name>pyridoxal 5'-phosphate</name>
        <dbReference type="ChEBI" id="CHEBI:597326"/>
    </cofactor>
    <text evidence="2">Binds 1 pyridoxal phosphate per subunit.</text>
</comment>
<comment type="subunit">
    <text evidence="2">Homodimer.</text>
</comment>
<comment type="similarity">
    <text evidence="3">Belongs to the diaminopropionate ammonia-lyase family.</text>
</comment>
<accession>P66900</accession>
<accession>Q46804</accession>
<reference key="1">
    <citation type="journal article" date="2002" name="Proc. Natl. Acad. Sci. U.S.A.">
        <title>Extensive mosaic structure revealed by the complete genome sequence of uropathogenic Escherichia coli.</title>
        <authorList>
            <person name="Welch R.A."/>
            <person name="Burland V."/>
            <person name="Plunkett G. III"/>
            <person name="Redford P."/>
            <person name="Roesch P."/>
            <person name="Rasko D."/>
            <person name="Buckles E.L."/>
            <person name="Liou S.-R."/>
            <person name="Boutin A."/>
            <person name="Hackett J."/>
            <person name="Stroud D."/>
            <person name="Mayhew G.F."/>
            <person name="Rose D.J."/>
            <person name="Zhou S."/>
            <person name="Schwartz D.C."/>
            <person name="Perna N.T."/>
            <person name="Mobley H.L.T."/>
            <person name="Donnenberg M.S."/>
            <person name="Blattner F.R."/>
        </authorList>
    </citation>
    <scope>NUCLEOTIDE SEQUENCE [LARGE SCALE GENOMIC DNA]</scope>
    <source>
        <strain>CFT073 / ATCC 700928 / UPEC</strain>
    </source>
</reference>
<name>DPAL_ECOL6</name>
<sequence length="398" mass="43328">MSVFSLKIDIADNKFFNGETSPLFSQSQAKLARQFHQKIAGYRPTPLCALDDLANLFGVKKILVKDESKRFGLNAFKMLGGAYAIAQLLCEKYHLDIETLSFEHLKNAIGEKMTFATTTDGNHGRGVAWAAQQLGQNAVIYMPKGSAQERVDAILNLGAECIVTDMNYDDTVRLTMQHAQQHGWEVVQDTAWEGYTKIPTWIMQGYATLADEAVEQMREMGVTPTHVLLQAGVGAMAGGVLGYLVDVYSPQNLHSIIVEPDKADCIYRSGVKGDIVNVGGDMATIMAGLACGEPNPLGWEILRNCATQFISCQDSVAALGMRVLGNPYGNDPRIISGESGAVGLGVLAAVHYHPQRQSLMEKLALNKDAVVLVISTEGDTDVKHYREVVWEGKHAVAP</sequence>